<organism>
    <name type="scientific">Methanocaldococcus jannaschii (strain ATCC 43067 / DSM 2661 / JAL-1 / JCM 10045 / NBRC 100440)</name>
    <name type="common">Methanococcus jannaschii</name>
    <dbReference type="NCBI Taxonomy" id="243232"/>
    <lineage>
        <taxon>Archaea</taxon>
        <taxon>Methanobacteriati</taxon>
        <taxon>Methanobacteriota</taxon>
        <taxon>Methanomada group</taxon>
        <taxon>Methanococci</taxon>
        <taxon>Methanococcales</taxon>
        <taxon>Methanocaldococcaceae</taxon>
        <taxon>Methanocaldococcus</taxon>
    </lineage>
</organism>
<evidence type="ECO:0000255" key="1"/>
<evidence type="ECO:0000305" key="2"/>
<proteinExistence type="predicted"/>
<gene>
    <name type="ordered locus">MJ1210</name>
</gene>
<sequence>MMFMVKIITRKVKDIEPLENALLIEGLPGIGHVGRLAAEHLVHEFKGEKFLELFCYDFPPQVLVKDDGTIEYMCAEFYAIREPKPMIVVLGNTQALSPIGQYHLAEEIVKIGIEYGANFVYTLGGFGVGKLCEEVKVYGATTSKELAKKLKEHDILFRTDGGGIVGAAGLMLMFADLNGIPGICLMGETPGYLIDPNAAKAVLEKFCKLENIEINMEELEKRAKGMEQFIEKIKKFEEEMLKAAQAKPPSEEDLRYIG</sequence>
<accession>Q58607</accession>
<dbReference type="EMBL" id="L77117">
    <property type="protein sequence ID" value="AAB99213.1"/>
    <property type="molecule type" value="Genomic_DNA"/>
</dbReference>
<dbReference type="PIR" id="A64451">
    <property type="entry name" value="A64451"/>
</dbReference>
<dbReference type="SMR" id="Q58607"/>
<dbReference type="STRING" id="243232.MJ_1210"/>
<dbReference type="PaxDb" id="243232-MJ_1210"/>
<dbReference type="DNASU" id="1452106"/>
<dbReference type="EnsemblBacteria" id="AAB99213">
    <property type="protein sequence ID" value="AAB99213"/>
    <property type="gene ID" value="MJ_1210"/>
</dbReference>
<dbReference type="KEGG" id="mja:MJ_1210"/>
<dbReference type="eggNOG" id="arCOG00348">
    <property type="taxonomic scope" value="Archaea"/>
</dbReference>
<dbReference type="HOGENOM" id="CLU_075000_1_0_2"/>
<dbReference type="InParanoid" id="Q58607"/>
<dbReference type="PhylomeDB" id="Q58607"/>
<dbReference type="Proteomes" id="UP000000805">
    <property type="component" value="Chromosome"/>
</dbReference>
<dbReference type="GO" id="GO:0016020">
    <property type="term" value="C:membrane"/>
    <property type="evidence" value="ECO:0007669"/>
    <property type="project" value="UniProtKB-SubCell"/>
</dbReference>
<dbReference type="Gene3D" id="3.40.50.10900">
    <property type="entry name" value="PAC-like subunit"/>
    <property type="match status" value="1"/>
</dbReference>
<dbReference type="InterPro" id="IPR004426">
    <property type="entry name" value="MJ1210-like"/>
</dbReference>
<dbReference type="InterPro" id="IPR019151">
    <property type="entry name" value="Proteasome_assmbl_chaperone_2"/>
</dbReference>
<dbReference type="InterPro" id="IPR038389">
    <property type="entry name" value="PSMG2_sf"/>
</dbReference>
<dbReference type="NCBIfam" id="TIGR00162">
    <property type="entry name" value="proteasome assembly chaperone family protein"/>
    <property type="match status" value="1"/>
</dbReference>
<dbReference type="PANTHER" id="PTHR35610:SF7">
    <property type="entry name" value="3-ISOPROPYLMALATE DEHYDRATASE"/>
    <property type="match status" value="1"/>
</dbReference>
<dbReference type="PANTHER" id="PTHR35610">
    <property type="entry name" value="3-ISOPROPYLMALATE DEHYDRATASE-RELATED"/>
    <property type="match status" value="1"/>
</dbReference>
<dbReference type="Pfam" id="PF09754">
    <property type="entry name" value="PAC2"/>
    <property type="match status" value="1"/>
</dbReference>
<dbReference type="SUPFAM" id="SSF159659">
    <property type="entry name" value="Cgl1923-like"/>
    <property type="match status" value="1"/>
</dbReference>
<protein>
    <recommendedName>
        <fullName>Uncharacterized protein MJ1210</fullName>
    </recommendedName>
</protein>
<keyword id="KW-0472">Membrane</keyword>
<keyword id="KW-1185">Reference proteome</keyword>
<keyword id="KW-0812">Transmembrane</keyword>
<keyword id="KW-1133">Transmembrane helix</keyword>
<name>Y1210_METJA</name>
<reference key="1">
    <citation type="journal article" date="1996" name="Science">
        <title>Complete genome sequence of the methanogenic archaeon, Methanococcus jannaschii.</title>
        <authorList>
            <person name="Bult C.J."/>
            <person name="White O."/>
            <person name="Olsen G.J."/>
            <person name="Zhou L."/>
            <person name="Fleischmann R.D."/>
            <person name="Sutton G.G."/>
            <person name="Blake J.A."/>
            <person name="FitzGerald L.M."/>
            <person name="Clayton R.A."/>
            <person name="Gocayne J.D."/>
            <person name="Kerlavage A.R."/>
            <person name="Dougherty B.A."/>
            <person name="Tomb J.-F."/>
            <person name="Adams M.D."/>
            <person name="Reich C.I."/>
            <person name="Overbeek R."/>
            <person name="Kirkness E.F."/>
            <person name="Weinstock K.G."/>
            <person name="Merrick J.M."/>
            <person name="Glodek A."/>
            <person name="Scott J.L."/>
            <person name="Geoghagen N.S.M."/>
            <person name="Weidman J.F."/>
            <person name="Fuhrmann J.L."/>
            <person name="Nguyen D."/>
            <person name="Utterback T.R."/>
            <person name="Kelley J.M."/>
            <person name="Peterson J.D."/>
            <person name="Sadow P.W."/>
            <person name="Hanna M.C."/>
            <person name="Cotton M.D."/>
            <person name="Roberts K.M."/>
            <person name="Hurst M.A."/>
            <person name="Kaine B.P."/>
            <person name="Borodovsky M."/>
            <person name="Klenk H.-P."/>
            <person name="Fraser C.M."/>
            <person name="Smith H.O."/>
            <person name="Woese C.R."/>
            <person name="Venter J.C."/>
        </authorList>
    </citation>
    <scope>NUCLEOTIDE SEQUENCE [LARGE SCALE GENOMIC DNA]</scope>
    <source>
        <strain>ATCC 43067 / DSM 2661 / JAL-1 / JCM 10045 / NBRC 100440</strain>
    </source>
</reference>
<feature type="chain" id="PRO_0000107214" description="Uncharacterized protein MJ1210">
    <location>
        <begin position="1"/>
        <end position="258"/>
    </location>
</feature>
<feature type="transmembrane region" description="Helical" evidence="1">
    <location>
        <begin position="163"/>
        <end position="187"/>
    </location>
</feature>
<comment type="subcellular location">
    <subcellularLocation>
        <location evidence="2">Membrane</location>
        <topology evidence="2">Single-pass membrane protein</topology>
    </subcellularLocation>
</comment>